<gene>
    <name type="primary">fbxl5</name>
</gene>
<name>FBXL5_XENLA</name>
<keyword id="KW-0963">Cytoplasm</keyword>
<keyword id="KW-0408">Iron</keyword>
<keyword id="KW-0411">Iron-sulfur</keyword>
<keyword id="KW-0433">Leucine-rich repeat</keyword>
<keyword id="KW-0479">Metal-binding</keyword>
<keyword id="KW-0539">Nucleus</keyword>
<keyword id="KW-1185">Reference proteome</keyword>
<keyword id="KW-0677">Repeat</keyword>
<keyword id="KW-0832">Ubl conjugation</keyword>
<keyword id="KW-0833">Ubl conjugation pathway</keyword>
<comment type="function">
    <text evidence="1">Component of some SCF (SKP1-cullin-F-box) protein ligase complex that plays a central role in iron homeostasis by promoting the ubiquitination and subsequent degradation of ireb2/irp2. Upon high iron and oxygen level, it specifically recognizes and binds ireb2/irp2, promoting its ubiquitination and degradation by the proteasome (By similarity).</text>
</comment>
<comment type="cofactor">
    <cofactor evidence="1">
        <name>[2Fe-2S] cluster</name>
        <dbReference type="ChEBI" id="CHEBI:190135"/>
    </cofactor>
</comment>
<comment type="pathway">
    <text>Protein modification; protein ubiquitination.</text>
</comment>
<comment type="subunit">
    <text evidence="1">Part of a SCF (SKP1-cullin-F-box) protein ligase complex.</text>
</comment>
<comment type="subcellular location">
    <subcellularLocation>
        <location evidence="1">Cytoplasm</location>
        <location evidence="1">Perinuclear region</location>
    </subcellularLocation>
    <subcellularLocation>
        <location evidence="1">Nucleus</location>
    </subcellularLocation>
</comment>
<comment type="domain">
    <text evidence="1">The hemerythrin-like region acts as an oxygen and iron sensor by binding oxygen through a diiron metal-center. In absence of oxygen and iron, the protein is ubiquitinated and degraded (By similarity).</text>
</comment>
<comment type="PTM">
    <text evidence="1">Ubiquitinated upon iron and oxygen depletion, leading to its degradation by the proteasome. Ubiquitination is regulated by the hemerythrin-like region that acts as an oxygen and iron sensor (By similarity).</text>
</comment>
<evidence type="ECO:0000250" key="1">
    <source>
        <dbReference type="UniProtKB" id="Q9UKA1"/>
    </source>
</evidence>
<evidence type="ECO:0000255" key="2">
    <source>
        <dbReference type="PROSITE-ProRule" id="PRU00080"/>
    </source>
</evidence>
<evidence type="ECO:0000256" key="3">
    <source>
        <dbReference type="SAM" id="MobiDB-lite"/>
    </source>
</evidence>
<proteinExistence type="evidence at transcript level"/>
<organism>
    <name type="scientific">Xenopus laevis</name>
    <name type="common">African clawed frog</name>
    <dbReference type="NCBI Taxonomy" id="8355"/>
    <lineage>
        <taxon>Eukaryota</taxon>
        <taxon>Metazoa</taxon>
        <taxon>Chordata</taxon>
        <taxon>Craniata</taxon>
        <taxon>Vertebrata</taxon>
        <taxon>Euteleostomi</taxon>
        <taxon>Amphibia</taxon>
        <taxon>Batrachia</taxon>
        <taxon>Anura</taxon>
        <taxon>Pipoidea</taxon>
        <taxon>Pipidae</taxon>
        <taxon>Xenopodinae</taxon>
        <taxon>Xenopus</taxon>
        <taxon>Xenopus</taxon>
    </lineage>
</organism>
<sequence length="678" mass="76873">MAPFPDEVDLFTGPHWRMKQLVGRYCEKLSNTNFSNNNDLLALLQSLYETFKEFKMHEQIENEYIIGLLQQRSHTVYNVHSDNKLSEMLVLFEKGMKNVKNEYKQLNYVQQLKERLEAFTSDFLPHMKEEEEVFQPMLMEYFTYDEMKDIKKKVIAQHCSQKDTTELLRGLSLWNKAEELQKVLKYSVDEKAERNSKTQKSSSSISSLPPEVMLNIFTYLNPQDLCRCSQVNTEWAQLAKTGSLWRHLYPVLWARGDWYSGSHAYLDNEPDEDWISRRKDESRAYQEWDEDADIDESEETGEEEDSSISMAQREKELLNSLVHYILPYVGHSVKTLVLAYSSATSSKVIRQMLEYCPNLEHLDLTQTDISDSAFNGWHFGACQTLHHIDLSGCDKITDLTLEKLSVALGIPSAHKKRLLKCYRNNRTLKDIRNQMRCSSLAQITGESTIYSDAFWANSDRSQDYTSPPIWILDSGNPGDIEDAADWKFRTTDGLCVLEMAPSVTCFSNGCCSRARPGRWTNVGWQEHCKAATVSYCGHTLCGNTLRTIHTLPEASALCNIGTRTLHSDITDCFPGSAKSDQQAARALQFLSLSGCHQITDHGLRALTIGGGLPKLEHLNLSGCLNVTGSGLQDLVATCPSLNDEHFYYCDNISGPHGATASGCQNLQCGFRMCCRSGE</sequence>
<protein>
    <recommendedName>
        <fullName>F-box/LRR-repeat protein 5</fullName>
    </recommendedName>
    <alternativeName>
        <fullName>F-box and leucine-rich repeat protein 5</fullName>
    </alternativeName>
</protein>
<dbReference type="EMBL" id="BC072202">
    <property type="protein sequence ID" value="AAH72202.1"/>
    <property type="molecule type" value="mRNA"/>
</dbReference>
<dbReference type="RefSeq" id="NP_001085061.1">
    <property type="nucleotide sequence ID" value="NM_001091592.1"/>
</dbReference>
<dbReference type="SMR" id="Q6INS1"/>
<dbReference type="DNASU" id="432131"/>
<dbReference type="GeneID" id="432131"/>
<dbReference type="KEGG" id="xla:432131"/>
<dbReference type="AGR" id="Xenbase:XB-GENE-968570"/>
<dbReference type="CTD" id="432131"/>
<dbReference type="Xenbase" id="XB-GENE-968570">
    <property type="gene designation" value="fbxl5.L"/>
</dbReference>
<dbReference type="OMA" id="EFIAHEQ"/>
<dbReference type="OrthoDB" id="10257471at2759"/>
<dbReference type="UniPathway" id="UPA00143"/>
<dbReference type="Proteomes" id="UP000186698">
    <property type="component" value="Chromosome 1L"/>
</dbReference>
<dbReference type="Bgee" id="432131">
    <property type="expression patterns" value="Expressed in testis and 19 other cell types or tissues"/>
</dbReference>
<dbReference type="GO" id="GO:0005634">
    <property type="term" value="C:nucleus"/>
    <property type="evidence" value="ECO:0007669"/>
    <property type="project" value="UniProtKB-SubCell"/>
</dbReference>
<dbReference type="GO" id="GO:0048471">
    <property type="term" value="C:perinuclear region of cytoplasm"/>
    <property type="evidence" value="ECO:0000250"/>
    <property type="project" value="UniProtKB"/>
</dbReference>
<dbReference type="GO" id="GO:0019005">
    <property type="term" value="C:SCF ubiquitin ligase complex"/>
    <property type="evidence" value="ECO:0000250"/>
    <property type="project" value="UniProtKB"/>
</dbReference>
<dbReference type="GO" id="GO:0005506">
    <property type="term" value="F:iron ion binding"/>
    <property type="evidence" value="ECO:0000250"/>
    <property type="project" value="UniProtKB"/>
</dbReference>
<dbReference type="GO" id="GO:0051536">
    <property type="term" value="F:iron-sulfur cluster binding"/>
    <property type="evidence" value="ECO:0007669"/>
    <property type="project" value="UniProtKB-KW"/>
</dbReference>
<dbReference type="GO" id="GO:0006879">
    <property type="term" value="P:intracellular iron ion homeostasis"/>
    <property type="evidence" value="ECO:0000250"/>
    <property type="project" value="UniProtKB"/>
</dbReference>
<dbReference type="GO" id="GO:0016567">
    <property type="term" value="P:protein ubiquitination"/>
    <property type="evidence" value="ECO:0000250"/>
    <property type="project" value="UniProtKB"/>
</dbReference>
<dbReference type="GO" id="GO:0031146">
    <property type="term" value="P:SCF-dependent proteasomal ubiquitin-dependent protein catabolic process"/>
    <property type="evidence" value="ECO:0000250"/>
    <property type="project" value="UniProtKB"/>
</dbReference>
<dbReference type="CDD" id="cd22118">
    <property type="entry name" value="F-box_FBXL5"/>
    <property type="match status" value="1"/>
</dbReference>
<dbReference type="CDD" id="cd12109">
    <property type="entry name" value="Hr_FBXL5"/>
    <property type="match status" value="1"/>
</dbReference>
<dbReference type="FunFam" id="3.80.10.10:FF:001008">
    <property type="entry name" value="F-box/LRR-repeat protein 5"/>
    <property type="match status" value="1"/>
</dbReference>
<dbReference type="FunFam" id="1.20.1280.50:FF:000007">
    <property type="entry name" value="F-box/LRR-repeat protein 5 isoform X1"/>
    <property type="match status" value="1"/>
</dbReference>
<dbReference type="FunFam" id="3.80.10.10:FF:000086">
    <property type="entry name" value="F-box/LRR-repeat protein 5 isoform X1"/>
    <property type="match status" value="1"/>
</dbReference>
<dbReference type="FunFam" id="1.20.120.520:FF:000002">
    <property type="entry name" value="F-box/LRR-repeat protein 5 isoform X2"/>
    <property type="match status" value="1"/>
</dbReference>
<dbReference type="Gene3D" id="1.20.1280.50">
    <property type="match status" value="1"/>
</dbReference>
<dbReference type="Gene3D" id="1.20.120.520">
    <property type="entry name" value="nmb1532 protein domain like"/>
    <property type="match status" value="1"/>
</dbReference>
<dbReference type="Gene3D" id="3.80.10.10">
    <property type="entry name" value="Ribonuclease Inhibitor"/>
    <property type="match status" value="2"/>
</dbReference>
<dbReference type="InterPro" id="IPR036047">
    <property type="entry name" value="F-box-like_dom_sf"/>
</dbReference>
<dbReference type="InterPro" id="IPR001810">
    <property type="entry name" value="F-box_dom"/>
</dbReference>
<dbReference type="InterPro" id="IPR012312">
    <property type="entry name" value="Hemerythrin-like"/>
</dbReference>
<dbReference type="InterPro" id="IPR045808">
    <property type="entry name" value="Hr_FBXL5"/>
</dbReference>
<dbReference type="InterPro" id="IPR001611">
    <property type="entry name" value="Leu-rich_rpt"/>
</dbReference>
<dbReference type="InterPro" id="IPR006553">
    <property type="entry name" value="Leu-rich_rpt_Cys-con_subtyp"/>
</dbReference>
<dbReference type="InterPro" id="IPR032675">
    <property type="entry name" value="LRR_dom_sf"/>
</dbReference>
<dbReference type="PANTHER" id="PTHR13318:SF19">
    <property type="entry name" value="F-BOX_LRR-REPEAT PROTEIN 5"/>
    <property type="match status" value="1"/>
</dbReference>
<dbReference type="PANTHER" id="PTHR13318">
    <property type="entry name" value="PARTNER OF PAIRED, ISOFORM B-RELATED"/>
    <property type="match status" value="1"/>
</dbReference>
<dbReference type="Pfam" id="PF12937">
    <property type="entry name" value="F-box-like"/>
    <property type="match status" value="1"/>
</dbReference>
<dbReference type="Pfam" id="PF01814">
    <property type="entry name" value="Hemerythrin"/>
    <property type="match status" value="1"/>
</dbReference>
<dbReference type="Pfam" id="PF13516">
    <property type="entry name" value="LRR_6"/>
    <property type="match status" value="3"/>
</dbReference>
<dbReference type="SMART" id="SM00256">
    <property type="entry name" value="FBOX"/>
    <property type="match status" value="1"/>
</dbReference>
<dbReference type="SMART" id="SM00367">
    <property type="entry name" value="LRR_CC"/>
    <property type="match status" value="5"/>
</dbReference>
<dbReference type="SUPFAM" id="SSF81383">
    <property type="entry name" value="F-box domain"/>
    <property type="match status" value="1"/>
</dbReference>
<dbReference type="SUPFAM" id="SSF52047">
    <property type="entry name" value="RNI-like"/>
    <property type="match status" value="1"/>
</dbReference>
<dbReference type="PROSITE" id="PS50181">
    <property type="entry name" value="FBOX"/>
    <property type="match status" value="1"/>
</dbReference>
<accession>Q6INS1</accession>
<reference key="1">
    <citation type="submission" date="2004-06" db="EMBL/GenBank/DDBJ databases">
        <authorList>
            <consortium name="NIH - Xenopus Gene Collection (XGC) project"/>
        </authorList>
    </citation>
    <scope>NUCLEOTIDE SEQUENCE [LARGE SCALE MRNA]</scope>
    <source>
        <tissue>Ovary</tissue>
    </source>
</reference>
<feature type="chain" id="PRO_0000390468" description="F-box/LRR-repeat protein 5">
    <location>
        <begin position="1"/>
        <end position="678"/>
    </location>
</feature>
<feature type="domain" description="F-box" evidence="2">
    <location>
        <begin position="202"/>
        <end position="248"/>
    </location>
</feature>
<feature type="repeat" description="LRR 1">
    <location>
        <begin position="314"/>
        <end position="340"/>
    </location>
</feature>
<feature type="repeat" description="LRR 2">
    <location>
        <begin position="341"/>
        <end position="366"/>
    </location>
</feature>
<feature type="repeat" description="LRR 3">
    <location>
        <begin position="367"/>
        <end position="392"/>
    </location>
</feature>
<feature type="repeat" description="LRR 4">
    <location>
        <begin position="393"/>
        <end position="420"/>
    </location>
</feature>
<feature type="repeat" description="LRR 5">
    <location>
        <begin position="566"/>
        <end position="594"/>
    </location>
</feature>
<feature type="repeat" description="LRR 6">
    <location>
        <begin position="595"/>
        <end position="622"/>
    </location>
</feature>
<feature type="repeat" description="LRR 7">
    <location>
        <begin position="623"/>
        <end position="648"/>
    </location>
</feature>
<feature type="repeat" description="LRR 8">
    <location>
        <begin position="655"/>
        <end position="678"/>
    </location>
</feature>
<feature type="region of interest" description="Hemerythrin-like" evidence="1">
    <location>
        <begin position="1"/>
        <end position="159"/>
    </location>
</feature>
<feature type="region of interest" description="Disordered" evidence="3">
    <location>
        <begin position="285"/>
        <end position="308"/>
    </location>
</feature>
<feature type="compositionally biased region" description="Acidic residues" evidence="3">
    <location>
        <begin position="287"/>
        <end position="306"/>
    </location>
</feature>
<feature type="binding site" evidence="1">
    <location>
        <position position="15"/>
    </location>
    <ligand>
        <name>Fe(3+)</name>
        <dbReference type="ChEBI" id="CHEBI:29034"/>
        <label>1</label>
    </ligand>
</feature>
<feature type="binding site" evidence="1">
    <location>
        <position position="57"/>
    </location>
    <ligand>
        <name>Fe(3+)</name>
        <dbReference type="ChEBI" id="CHEBI:29034"/>
        <label>1</label>
    </ligand>
</feature>
<feature type="binding site" evidence="1">
    <location>
        <position position="58"/>
    </location>
    <ligand>
        <name>Fe(3+)</name>
        <dbReference type="ChEBI" id="CHEBI:29034"/>
        <label>2</label>
    </ligand>
</feature>
<feature type="binding site" evidence="1">
    <location>
        <position position="61"/>
    </location>
    <ligand>
        <name>Fe(3+)</name>
        <dbReference type="ChEBI" id="CHEBI:29034"/>
        <label>1</label>
    </ligand>
</feature>
<feature type="binding site" evidence="1">
    <location>
        <position position="61"/>
    </location>
    <ligand>
        <name>Fe(3+)</name>
        <dbReference type="ChEBI" id="CHEBI:29034"/>
        <label>2</label>
    </ligand>
</feature>
<feature type="binding site" evidence="1">
    <location>
        <position position="80"/>
    </location>
    <ligand>
        <name>Fe(3+)</name>
        <dbReference type="ChEBI" id="CHEBI:29034"/>
        <label>2</label>
    </ligand>
</feature>
<feature type="binding site" evidence="1">
    <location>
        <position position="126"/>
    </location>
    <ligand>
        <name>Fe(3+)</name>
        <dbReference type="ChEBI" id="CHEBI:29034"/>
        <label>2</label>
    </ligand>
</feature>
<feature type="binding site" evidence="1">
    <location>
        <position position="130"/>
    </location>
    <ligand>
        <name>Fe(3+)</name>
        <dbReference type="ChEBI" id="CHEBI:29034"/>
        <label>1</label>
    </ligand>
</feature>
<feature type="binding site" evidence="1">
    <location>
        <position position="130"/>
    </location>
    <ligand>
        <name>Fe(3+)</name>
        <dbReference type="ChEBI" id="CHEBI:29034"/>
        <label>2</label>
    </ligand>
</feature>
<feature type="binding site" evidence="1">
    <location>
        <position position="649"/>
    </location>
    <ligand>
        <name>[2Fe-2S] cluster</name>
        <dbReference type="ChEBI" id="CHEBI:190135"/>
    </ligand>
</feature>
<feature type="binding site" evidence="1">
    <location>
        <position position="663"/>
    </location>
    <ligand>
        <name>[2Fe-2S] cluster</name>
        <dbReference type="ChEBI" id="CHEBI:190135"/>
    </ligand>
</feature>
<feature type="binding site" evidence="1">
    <location>
        <position position="673"/>
    </location>
    <ligand>
        <name>[2Fe-2S] cluster</name>
        <dbReference type="ChEBI" id="CHEBI:190135"/>
    </ligand>
</feature>
<feature type="binding site" evidence="1">
    <location>
        <position position="674"/>
    </location>
    <ligand>
        <name>[2Fe-2S] cluster</name>
        <dbReference type="ChEBI" id="CHEBI:190135"/>
    </ligand>
</feature>